<dbReference type="EMBL" id="CP000526">
    <property type="protein sequence ID" value="ABM49867.1"/>
    <property type="molecule type" value="Genomic_DNA"/>
</dbReference>
<dbReference type="SMR" id="A1V2P7"/>
<dbReference type="KEGG" id="bmv:BMASAVP1_A1161"/>
<dbReference type="HOGENOM" id="CLU_061989_0_0_4"/>
<dbReference type="GO" id="GO:0005829">
    <property type="term" value="C:cytosol"/>
    <property type="evidence" value="ECO:0007669"/>
    <property type="project" value="TreeGrafter"/>
</dbReference>
<dbReference type="GO" id="GO:0033194">
    <property type="term" value="P:response to hydroperoxide"/>
    <property type="evidence" value="ECO:0007669"/>
    <property type="project" value="TreeGrafter"/>
</dbReference>
<dbReference type="HAMAP" id="MF_00652">
    <property type="entry name" value="UPF0246"/>
    <property type="match status" value="1"/>
</dbReference>
<dbReference type="InterPro" id="IPR005583">
    <property type="entry name" value="YaaA"/>
</dbReference>
<dbReference type="NCBIfam" id="NF002541">
    <property type="entry name" value="PRK02101.1-1"/>
    <property type="match status" value="1"/>
</dbReference>
<dbReference type="NCBIfam" id="NF002542">
    <property type="entry name" value="PRK02101.1-3"/>
    <property type="match status" value="1"/>
</dbReference>
<dbReference type="PANTHER" id="PTHR30283:SF4">
    <property type="entry name" value="PEROXIDE STRESS RESISTANCE PROTEIN YAAA"/>
    <property type="match status" value="1"/>
</dbReference>
<dbReference type="PANTHER" id="PTHR30283">
    <property type="entry name" value="PEROXIDE STRESS RESPONSE PROTEIN YAAA"/>
    <property type="match status" value="1"/>
</dbReference>
<dbReference type="Pfam" id="PF03883">
    <property type="entry name" value="H2O2_YaaD"/>
    <property type="match status" value="1"/>
</dbReference>
<protein>
    <recommendedName>
        <fullName evidence="1">UPF0246 protein BMASAVP1_A1161</fullName>
    </recommendedName>
</protein>
<comment type="similarity">
    <text evidence="1">Belongs to the UPF0246 family.</text>
</comment>
<accession>A1V2P7</accession>
<proteinExistence type="inferred from homology"/>
<gene>
    <name type="ordered locus">BMASAVP1_A1161</name>
</gene>
<sequence length="260" mass="29184">MIIVLSPAKSLDYETPPHVSHHTQPQFADDAAALIDELRRLSPQQIATLMSISDPLARLNFQRYADWSRASTPANAKQAVLAFNGDVYEGLDARSLSPDDLDYAQRHVRVLSGLYGLLRPLDLLQPYRLEMGTRFSNARGKDLYAFWGERITHALNAELKTRVGASRVLVNCASAEYFKSVKPKLLDARVVTPVFEDWKDGRYKIISFHAKRARGLMARYVVEGRIDSPDALKDFASEGYAFDASASNDDTYVFRRRAGA</sequence>
<reference key="1">
    <citation type="journal article" date="2010" name="Genome Biol. Evol.">
        <title>Continuing evolution of Burkholderia mallei through genome reduction and large-scale rearrangements.</title>
        <authorList>
            <person name="Losada L."/>
            <person name="Ronning C.M."/>
            <person name="DeShazer D."/>
            <person name="Woods D."/>
            <person name="Fedorova N."/>
            <person name="Kim H.S."/>
            <person name="Shabalina S.A."/>
            <person name="Pearson T.R."/>
            <person name="Brinkac L."/>
            <person name="Tan P."/>
            <person name="Nandi T."/>
            <person name="Crabtree J."/>
            <person name="Badger J."/>
            <person name="Beckstrom-Sternberg S."/>
            <person name="Saqib M."/>
            <person name="Schutzer S.E."/>
            <person name="Keim P."/>
            <person name="Nierman W.C."/>
        </authorList>
    </citation>
    <scope>NUCLEOTIDE SEQUENCE [LARGE SCALE GENOMIC DNA]</scope>
    <source>
        <strain>SAVP1</strain>
    </source>
</reference>
<feature type="chain" id="PRO_1000061591" description="UPF0246 protein BMASAVP1_A1161">
    <location>
        <begin position="1"/>
        <end position="260"/>
    </location>
</feature>
<evidence type="ECO:0000255" key="1">
    <source>
        <dbReference type="HAMAP-Rule" id="MF_00652"/>
    </source>
</evidence>
<organism>
    <name type="scientific">Burkholderia mallei (strain SAVP1)</name>
    <dbReference type="NCBI Taxonomy" id="320388"/>
    <lineage>
        <taxon>Bacteria</taxon>
        <taxon>Pseudomonadati</taxon>
        <taxon>Pseudomonadota</taxon>
        <taxon>Betaproteobacteria</taxon>
        <taxon>Burkholderiales</taxon>
        <taxon>Burkholderiaceae</taxon>
        <taxon>Burkholderia</taxon>
        <taxon>pseudomallei group</taxon>
    </lineage>
</organism>
<name>Y2961_BURMS</name>